<protein>
    <recommendedName>
        <fullName>Hsp70-Hsp90 organizing protein 1</fullName>
        <shortName>AtHop1</shortName>
    </recommendedName>
    <alternativeName>
        <fullName>Stress-induced-phosphoprotein 1</fullName>
        <shortName>STI1</shortName>
    </alternativeName>
</protein>
<feature type="chain" id="PRO_0000426701" description="Hsp70-Hsp90 organizing protein 1">
    <location>
        <begin position="1"/>
        <end position="572"/>
    </location>
</feature>
<feature type="repeat" description="TPR 1">
    <location>
        <begin position="2"/>
        <end position="35"/>
    </location>
</feature>
<feature type="repeat" description="TPR 2">
    <location>
        <begin position="37"/>
        <end position="69"/>
    </location>
</feature>
<feature type="repeat" description="TPR 3">
    <location>
        <begin position="70"/>
        <end position="103"/>
    </location>
</feature>
<feature type="domain" description="STI1 1">
    <location>
        <begin position="133"/>
        <end position="172"/>
    </location>
</feature>
<feature type="repeat" description="TPR 4">
    <location>
        <begin position="244"/>
        <end position="277"/>
    </location>
</feature>
<feature type="repeat" description="TPR 5">
    <location>
        <begin position="279"/>
        <end position="311"/>
    </location>
</feature>
<feature type="repeat" description="TPR 6">
    <location>
        <begin position="319"/>
        <end position="356"/>
    </location>
</feature>
<feature type="repeat" description="TPR 7">
    <location>
        <begin position="358"/>
        <end position="382"/>
    </location>
</feature>
<feature type="repeat" description="TPR 8">
    <location>
        <begin position="383"/>
        <end position="416"/>
    </location>
</feature>
<feature type="repeat" description="TPR 9">
    <location>
        <begin position="418"/>
        <end position="450"/>
    </location>
</feature>
<feature type="repeat" description="TPR 10">
    <location>
        <begin position="451"/>
        <end position="484"/>
    </location>
</feature>
<feature type="domain" description="STI1 2">
    <location>
        <begin position="521"/>
        <end position="560"/>
    </location>
</feature>
<feature type="region of interest" description="Disordered" evidence="4">
    <location>
        <begin position="189"/>
        <end position="248"/>
    </location>
</feature>
<feature type="short sequence motif" description="Bipartite nuclear localization signal" evidence="3">
    <location>
        <begin position="241"/>
        <end position="258"/>
    </location>
</feature>
<feature type="compositionally biased region" description="Basic and acidic residues" evidence="4">
    <location>
        <begin position="232"/>
        <end position="248"/>
    </location>
</feature>
<feature type="modified residue" description="Phosphoserine" evidence="2">
    <location>
        <position position="167"/>
    </location>
</feature>
<reference key="1">
    <citation type="journal article" date="2000" name="Nature">
        <title>Sequence and analysis of chromosome 1 of the plant Arabidopsis thaliana.</title>
        <authorList>
            <person name="Theologis A."/>
            <person name="Ecker J.R."/>
            <person name="Palm C.J."/>
            <person name="Federspiel N.A."/>
            <person name="Kaul S."/>
            <person name="White O."/>
            <person name="Alonso J."/>
            <person name="Altafi H."/>
            <person name="Araujo R."/>
            <person name="Bowman C.L."/>
            <person name="Brooks S.Y."/>
            <person name="Buehler E."/>
            <person name="Chan A."/>
            <person name="Chao Q."/>
            <person name="Chen H."/>
            <person name="Cheuk R.F."/>
            <person name="Chin C.W."/>
            <person name="Chung M.K."/>
            <person name="Conn L."/>
            <person name="Conway A.B."/>
            <person name="Conway A.R."/>
            <person name="Creasy T.H."/>
            <person name="Dewar K."/>
            <person name="Dunn P."/>
            <person name="Etgu P."/>
            <person name="Feldblyum T.V."/>
            <person name="Feng J.-D."/>
            <person name="Fong B."/>
            <person name="Fujii C.Y."/>
            <person name="Gill J.E."/>
            <person name="Goldsmith A.D."/>
            <person name="Haas B."/>
            <person name="Hansen N.F."/>
            <person name="Hughes B."/>
            <person name="Huizar L."/>
            <person name="Hunter J.L."/>
            <person name="Jenkins J."/>
            <person name="Johnson-Hopson C."/>
            <person name="Khan S."/>
            <person name="Khaykin E."/>
            <person name="Kim C.J."/>
            <person name="Koo H.L."/>
            <person name="Kremenetskaia I."/>
            <person name="Kurtz D.B."/>
            <person name="Kwan A."/>
            <person name="Lam B."/>
            <person name="Langin-Hooper S."/>
            <person name="Lee A."/>
            <person name="Lee J.M."/>
            <person name="Lenz C.A."/>
            <person name="Li J.H."/>
            <person name="Li Y.-P."/>
            <person name="Lin X."/>
            <person name="Liu S.X."/>
            <person name="Liu Z.A."/>
            <person name="Luros J.S."/>
            <person name="Maiti R."/>
            <person name="Marziali A."/>
            <person name="Militscher J."/>
            <person name="Miranda M."/>
            <person name="Nguyen M."/>
            <person name="Nierman W.C."/>
            <person name="Osborne B.I."/>
            <person name="Pai G."/>
            <person name="Peterson J."/>
            <person name="Pham P.K."/>
            <person name="Rizzo M."/>
            <person name="Rooney T."/>
            <person name="Rowley D."/>
            <person name="Sakano H."/>
            <person name="Salzberg S.L."/>
            <person name="Schwartz J.R."/>
            <person name="Shinn P."/>
            <person name="Southwick A.M."/>
            <person name="Sun H."/>
            <person name="Tallon L.J."/>
            <person name="Tambunga G."/>
            <person name="Toriumi M.J."/>
            <person name="Town C.D."/>
            <person name="Utterback T."/>
            <person name="Van Aken S."/>
            <person name="Vaysberg M."/>
            <person name="Vysotskaia V.S."/>
            <person name="Walker M."/>
            <person name="Wu D."/>
            <person name="Yu G."/>
            <person name="Fraser C.M."/>
            <person name="Venter J.C."/>
            <person name="Davis R.W."/>
        </authorList>
    </citation>
    <scope>NUCLEOTIDE SEQUENCE [LARGE SCALE GENOMIC DNA]</scope>
    <source>
        <strain>cv. Columbia</strain>
    </source>
</reference>
<reference key="2">
    <citation type="journal article" date="2017" name="Plant J.">
        <title>Araport11: a complete reannotation of the Arabidopsis thaliana reference genome.</title>
        <authorList>
            <person name="Cheng C.Y."/>
            <person name="Krishnakumar V."/>
            <person name="Chan A.P."/>
            <person name="Thibaud-Nissen F."/>
            <person name="Schobel S."/>
            <person name="Town C.D."/>
        </authorList>
    </citation>
    <scope>GENOME REANNOTATION</scope>
    <source>
        <strain>cv. Columbia</strain>
    </source>
</reference>
<reference key="3">
    <citation type="journal article" date="2003" name="Science">
        <title>Empirical analysis of transcriptional activity in the Arabidopsis genome.</title>
        <authorList>
            <person name="Yamada K."/>
            <person name="Lim J."/>
            <person name="Dale J.M."/>
            <person name="Chen H."/>
            <person name="Shinn P."/>
            <person name="Palm C.J."/>
            <person name="Southwick A.M."/>
            <person name="Wu H.C."/>
            <person name="Kim C.J."/>
            <person name="Nguyen M."/>
            <person name="Pham P.K."/>
            <person name="Cheuk R.F."/>
            <person name="Karlin-Newmann G."/>
            <person name="Liu S.X."/>
            <person name="Lam B."/>
            <person name="Sakano H."/>
            <person name="Wu T."/>
            <person name="Yu G."/>
            <person name="Miranda M."/>
            <person name="Quach H.L."/>
            <person name="Tripp M."/>
            <person name="Chang C.H."/>
            <person name="Lee J.M."/>
            <person name="Toriumi M.J."/>
            <person name="Chan M.M."/>
            <person name="Tang C.C."/>
            <person name="Onodera C.S."/>
            <person name="Deng J.M."/>
            <person name="Akiyama K."/>
            <person name="Ansari Y."/>
            <person name="Arakawa T."/>
            <person name="Banh J."/>
            <person name="Banno F."/>
            <person name="Bowser L."/>
            <person name="Brooks S.Y."/>
            <person name="Carninci P."/>
            <person name="Chao Q."/>
            <person name="Choy N."/>
            <person name="Enju A."/>
            <person name="Goldsmith A.D."/>
            <person name="Gurjal M."/>
            <person name="Hansen N.F."/>
            <person name="Hayashizaki Y."/>
            <person name="Johnson-Hopson C."/>
            <person name="Hsuan V.W."/>
            <person name="Iida K."/>
            <person name="Karnes M."/>
            <person name="Khan S."/>
            <person name="Koesema E."/>
            <person name="Ishida J."/>
            <person name="Jiang P.X."/>
            <person name="Jones T."/>
            <person name="Kawai J."/>
            <person name="Kamiya A."/>
            <person name="Meyers C."/>
            <person name="Nakajima M."/>
            <person name="Narusaka M."/>
            <person name="Seki M."/>
            <person name="Sakurai T."/>
            <person name="Satou M."/>
            <person name="Tamse R."/>
            <person name="Vaysberg M."/>
            <person name="Wallender E.K."/>
            <person name="Wong C."/>
            <person name="Yamamura Y."/>
            <person name="Yuan S."/>
            <person name="Shinozaki K."/>
            <person name="Davis R.W."/>
            <person name="Theologis A."/>
            <person name="Ecker J.R."/>
        </authorList>
    </citation>
    <scope>NUCLEOTIDE SEQUENCE [LARGE SCALE MRNA]</scope>
    <source>
        <strain>cv. Columbia</strain>
    </source>
</reference>
<reference key="4">
    <citation type="submission" date="2003-05" db="EMBL/GenBank/DDBJ databases">
        <title>Proteins contain similarity to TPR domains.</title>
        <authorList>
            <person name="Shen W.H."/>
        </authorList>
    </citation>
    <scope>NUCLEOTIDE SEQUENCE [MRNA] OF 408-572</scope>
</reference>
<reference key="5">
    <citation type="journal article" date="2010" name="PLoS ONE">
        <title>In silico identification of carboxylate clamp type tetratricopeptide repeat proteins in Arabidopsis and rice as putative co-chaperones of Hsp90/Hsp70.</title>
        <authorList>
            <person name="Prasad B.D."/>
            <person name="Goel S."/>
            <person name="Krishna P."/>
        </authorList>
    </citation>
    <scope>GENE FAMILY</scope>
    <scope>NOMENCLATURE</scope>
</reference>
<sequence>MAEEAKAKGNAAFSSGDFTTAINHFTEAIALAPTNHVLFSNRSAAHASLHQYAEALSDAKETIKLKPYWPKGYSRLGAAHLGLNQFELAVTAYKKGLDVDPTNEALKSGLADAEASVARSRAAPNPFGDAFQGPEMWTKLTSDPSTRGFLQQPDFVNMMQEIQKNPSSLNLYLKDQRVMQSLGVLLNVKFRPPPPQGDEAEVPESDMGQSSSNEPEVEKKREPEPEPEPEVTEEKEKKERKEKAKKEKELGNAAYKKKDFETAIQHYSTAIEIDDEDISYLTNRAAVYLEMGKYNECIEDCNKAVERGRELRSDYKMVARALTRKGTALTKMAKCSKDYEPAIEAFQKALTEHRNPDTLKRLNDAERAKKEWEQKQYFDPKLGDEEREKGNDFFKEQKYPEAIKHYTEAIKRNPNDHKAYSNRAASYTKLGAMPEGLKDAEKCIELDPTFSKGYSRKAAVQFFLKEYDNAMETYQAGLEHDPSNQELLDGVKRCVQQINKANRGDLTPEELKERQAKGMQDPEIQNILTDPVMRQVLSDLQENPSAAQKHMQNPMVMNKIQKLISAGIVQMK</sequence>
<accession>Q9LNB6</accession>
<accession>Q7Y1Y9</accession>
<dbReference type="EMBL" id="AC025416">
    <property type="protein sequence ID" value="AAF79628.1"/>
    <property type="molecule type" value="Genomic_DNA"/>
</dbReference>
<dbReference type="EMBL" id="CP002684">
    <property type="protein sequence ID" value="AEE28860.1"/>
    <property type="molecule type" value="Genomic_DNA"/>
</dbReference>
<dbReference type="EMBL" id="AY064967">
    <property type="protein sequence ID" value="AAL38384.1"/>
    <property type="molecule type" value="mRNA"/>
</dbReference>
<dbReference type="EMBL" id="BT000651">
    <property type="protein sequence ID" value="AAN18217.1"/>
    <property type="molecule type" value="mRNA"/>
</dbReference>
<dbReference type="EMBL" id="AJ319538">
    <property type="protein sequence ID" value="CAC85343.1"/>
    <property type="molecule type" value="mRNA"/>
</dbReference>
<dbReference type="PIR" id="H86257">
    <property type="entry name" value="H86257"/>
</dbReference>
<dbReference type="RefSeq" id="NP_172691.1">
    <property type="nucleotide sequence ID" value="NM_101099.5"/>
</dbReference>
<dbReference type="SMR" id="Q9LNB6"/>
<dbReference type="BioGRID" id="23021">
    <property type="interactions" value="19"/>
</dbReference>
<dbReference type="FunCoup" id="Q9LNB6">
    <property type="interactions" value="4166"/>
</dbReference>
<dbReference type="IntAct" id="Q9LNB6">
    <property type="interactions" value="2"/>
</dbReference>
<dbReference type="STRING" id="3702.Q9LNB6"/>
<dbReference type="iPTMnet" id="Q9LNB6"/>
<dbReference type="MetOSite" id="Q9LNB6"/>
<dbReference type="PaxDb" id="3702-AT1G12270.1"/>
<dbReference type="ProteomicsDB" id="230217"/>
<dbReference type="EnsemblPlants" id="AT1G12270.1">
    <property type="protein sequence ID" value="AT1G12270.1"/>
    <property type="gene ID" value="AT1G12270"/>
</dbReference>
<dbReference type="GeneID" id="837781"/>
<dbReference type="Gramene" id="AT1G12270.1">
    <property type="protein sequence ID" value="AT1G12270.1"/>
    <property type="gene ID" value="AT1G12270"/>
</dbReference>
<dbReference type="KEGG" id="ath:AT1G12270"/>
<dbReference type="Araport" id="AT1G12270"/>
<dbReference type="TAIR" id="AT1G12270">
    <property type="gene designation" value="HOP1"/>
</dbReference>
<dbReference type="eggNOG" id="KOG0548">
    <property type="taxonomic scope" value="Eukaryota"/>
</dbReference>
<dbReference type="HOGENOM" id="CLU_000134_46_5_1"/>
<dbReference type="InParanoid" id="Q9LNB6"/>
<dbReference type="OMA" id="QGPEMWT"/>
<dbReference type="PhylomeDB" id="Q9LNB6"/>
<dbReference type="CD-CODE" id="4299E36E">
    <property type="entry name" value="Nucleolus"/>
</dbReference>
<dbReference type="PRO" id="PR:Q9LNB6"/>
<dbReference type="Proteomes" id="UP000006548">
    <property type="component" value="Chromosome 1"/>
</dbReference>
<dbReference type="ExpressionAtlas" id="Q9LNB6">
    <property type="expression patterns" value="baseline and differential"/>
</dbReference>
<dbReference type="GO" id="GO:0005737">
    <property type="term" value="C:cytoplasm"/>
    <property type="evidence" value="ECO:0007669"/>
    <property type="project" value="UniProtKB-SubCell"/>
</dbReference>
<dbReference type="GO" id="GO:0005576">
    <property type="term" value="C:extracellular region"/>
    <property type="evidence" value="ECO:0007005"/>
    <property type="project" value="TAIR"/>
</dbReference>
<dbReference type="GO" id="GO:0005634">
    <property type="term" value="C:nucleus"/>
    <property type="evidence" value="ECO:0007669"/>
    <property type="project" value="UniProtKB-SubCell"/>
</dbReference>
<dbReference type="GO" id="GO:0051879">
    <property type="term" value="F:Hsp90 protein binding"/>
    <property type="evidence" value="ECO:0000250"/>
    <property type="project" value="UniProtKB"/>
</dbReference>
<dbReference type="GO" id="GO:0070678">
    <property type="term" value="F:preprotein binding"/>
    <property type="evidence" value="ECO:0000250"/>
    <property type="project" value="UniProtKB"/>
</dbReference>
<dbReference type="GO" id="GO:0051131">
    <property type="term" value="P:chaperone-mediated protein complex assembly"/>
    <property type="evidence" value="ECO:0000250"/>
    <property type="project" value="UniProtKB"/>
</dbReference>
<dbReference type="FunFam" id="1.25.40.10:FF:000102">
    <property type="entry name" value="hsp70-Hsp90 organizing protein 3-like"/>
    <property type="match status" value="1"/>
</dbReference>
<dbReference type="FunFam" id="1.10.260.100:FF:000004">
    <property type="entry name" value="Putative stress-induced-phosphoprotein 1"/>
    <property type="match status" value="1"/>
</dbReference>
<dbReference type="FunFam" id="1.25.40.10:FF:000010">
    <property type="entry name" value="Stress-induced phosphoprotein 1"/>
    <property type="match status" value="1"/>
</dbReference>
<dbReference type="FunFam" id="1.25.40.10:FF:000020">
    <property type="entry name" value="Stress-induced phosphoprotein 1"/>
    <property type="match status" value="1"/>
</dbReference>
<dbReference type="FunFam" id="1.10.260.100:FF:000002">
    <property type="entry name" value="Stress-induced-phosphoprotein 1 (Hsp70/Hsp90-organizing)"/>
    <property type="match status" value="1"/>
</dbReference>
<dbReference type="Gene3D" id="1.10.260.100">
    <property type="match status" value="2"/>
</dbReference>
<dbReference type="Gene3D" id="1.25.40.10">
    <property type="entry name" value="Tetratricopeptide repeat domain"/>
    <property type="match status" value="3"/>
</dbReference>
<dbReference type="InterPro" id="IPR041243">
    <property type="entry name" value="STI1/HOP_DP"/>
</dbReference>
<dbReference type="InterPro" id="IPR006636">
    <property type="entry name" value="STI1_HS-bd"/>
</dbReference>
<dbReference type="InterPro" id="IPR011990">
    <property type="entry name" value="TPR-like_helical_dom_sf"/>
</dbReference>
<dbReference type="InterPro" id="IPR019734">
    <property type="entry name" value="TPR_rpt"/>
</dbReference>
<dbReference type="PANTHER" id="PTHR22904:SF536">
    <property type="entry name" value="HSP70-HSP90 ORGANIZING PROTEIN 1-RELATED"/>
    <property type="match status" value="1"/>
</dbReference>
<dbReference type="PANTHER" id="PTHR22904">
    <property type="entry name" value="TPR REPEAT CONTAINING PROTEIN"/>
    <property type="match status" value="1"/>
</dbReference>
<dbReference type="Pfam" id="PF17830">
    <property type="entry name" value="STI1-HOP_DP"/>
    <property type="match status" value="2"/>
</dbReference>
<dbReference type="Pfam" id="PF13414">
    <property type="entry name" value="TPR_11"/>
    <property type="match status" value="2"/>
</dbReference>
<dbReference type="Pfam" id="PF13181">
    <property type="entry name" value="TPR_8"/>
    <property type="match status" value="1"/>
</dbReference>
<dbReference type="SMART" id="SM00727">
    <property type="entry name" value="STI1"/>
    <property type="match status" value="2"/>
</dbReference>
<dbReference type="SMART" id="SM00028">
    <property type="entry name" value="TPR"/>
    <property type="match status" value="9"/>
</dbReference>
<dbReference type="SUPFAM" id="SSF48452">
    <property type="entry name" value="TPR-like"/>
    <property type="match status" value="1"/>
</dbReference>
<dbReference type="PROSITE" id="PS50005">
    <property type="entry name" value="TPR"/>
    <property type="match status" value="9"/>
</dbReference>
<dbReference type="PROSITE" id="PS50293">
    <property type="entry name" value="TPR_REGION"/>
    <property type="match status" value="2"/>
</dbReference>
<gene>
    <name type="primary">HOP1</name>
    <name type="ordered locus">At1g12270</name>
    <name type="ORF">F5O11.2</name>
</gene>
<evidence type="ECO:0000250" key="1"/>
<evidence type="ECO:0000250" key="2">
    <source>
        <dbReference type="UniProtKB" id="Q5XEP2"/>
    </source>
</evidence>
<evidence type="ECO:0000255" key="3"/>
<evidence type="ECO:0000256" key="4">
    <source>
        <dbReference type="SAM" id="MobiDB-lite"/>
    </source>
</evidence>
<comment type="function">
    <text evidence="1">Mediates the association of the molecular chaperones HSP70 and HSP90. Mediates nuclear encoded chloroplast preproteins binding to HSP90 prior to chloroplastic sorting (By similarity).</text>
</comment>
<comment type="subunit">
    <text evidence="1">Co-chaperone that forms a complex with HSP70 and HSP90 and preproteins (e.g. chloroplast preproteins) (By similarity).</text>
</comment>
<comment type="subcellular location">
    <subcellularLocation>
        <location evidence="1">Cytoplasm</location>
    </subcellularLocation>
    <subcellularLocation>
        <location evidence="1">Nucleus</location>
    </subcellularLocation>
</comment>
<comment type="domain">
    <text evidence="1">The tetratricopeptide repeat (TPR) domain, forming a carboxylate clamp (CC), mediates interaction with the highly conserved 'EEVD' motif at the C-terminal ends of HSP90 and HSP70.</text>
</comment>
<comment type="PTM">
    <text evidence="1">Phosphorylated.</text>
</comment>
<comment type="PTM">
    <text evidence="1">Acetylated.</text>
</comment>
<organism>
    <name type="scientific">Arabidopsis thaliana</name>
    <name type="common">Mouse-ear cress</name>
    <dbReference type="NCBI Taxonomy" id="3702"/>
    <lineage>
        <taxon>Eukaryota</taxon>
        <taxon>Viridiplantae</taxon>
        <taxon>Streptophyta</taxon>
        <taxon>Embryophyta</taxon>
        <taxon>Tracheophyta</taxon>
        <taxon>Spermatophyta</taxon>
        <taxon>Magnoliopsida</taxon>
        <taxon>eudicotyledons</taxon>
        <taxon>Gunneridae</taxon>
        <taxon>Pentapetalae</taxon>
        <taxon>rosids</taxon>
        <taxon>malvids</taxon>
        <taxon>Brassicales</taxon>
        <taxon>Brassicaceae</taxon>
        <taxon>Camelineae</taxon>
        <taxon>Arabidopsis</taxon>
    </lineage>
</organism>
<name>HSOP1_ARATH</name>
<keyword id="KW-0007">Acetylation</keyword>
<keyword id="KW-0143">Chaperone</keyword>
<keyword id="KW-0963">Cytoplasm</keyword>
<keyword id="KW-0539">Nucleus</keyword>
<keyword id="KW-0597">Phosphoprotein</keyword>
<keyword id="KW-1185">Reference proteome</keyword>
<keyword id="KW-0677">Repeat</keyword>
<keyword id="KW-0346">Stress response</keyword>
<keyword id="KW-0802">TPR repeat</keyword>
<proteinExistence type="evidence at transcript level"/>